<gene>
    <name evidence="2" type="primary">atpA</name>
    <name type="ordered locus">Syncc9605_2188</name>
</gene>
<dbReference type="EC" id="7.1.2.2" evidence="2"/>
<dbReference type="EMBL" id="CP000110">
    <property type="protein sequence ID" value="ABB35927.1"/>
    <property type="molecule type" value="Genomic_DNA"/>
</dbReference>
<dbReference type="RefSeq" id="WP_011365131.1">
    <property type="nucleotide sequence ID" value="NC_007516.1"/>
</dbReference>
<dbReference type="SMR" id="Q3AHK5"/>
<dbReference type="STRING" id="110662.Syncc9605_2188"/>
<dbReference type="KEGG" id="syd:Syncc9605_2188"/>
<dbReference type="eggNOG" id="COG0056">
    <property type="taxonomic scope" value="Bacteria"/>
</dbReference>
<dbReference type="HOGENOM" id="CLU_010091_2_1_3"/>
<dbReference type="OrthoDB" id="9803053at2"/>
<dbReference type="GO" id="GO:0031676">
    <property type="term" value="C:plasma membrane-derived thylakoid membrane"/>
    <property type="evidence" value="ECO:0007669"/>
    <property type="project" value="UniProtKB-SubCell"/>
</dbReference>
<dbReference type="GO" id="GO:0045259">
    <property type="term" value="C:proton-transporting ATP synthase complex"/>
    <property type="evidence" value="ECO:0007669"/>
    <property type="project" value="UniProtKB-KW"/>
</dbReference>
<dbReference type="GO" id="GO:0043531">
    <property type="term" value="F:ADP binding"/>
    <property type="evidence" value="ECO:0007669"/>
    <property type="project" value="TreeGrafter"/>
</dbReference>
<dbReference type="GO" id="GO:0005524">
    <property type="term" value="F:ATP binding"/>
    <property type="evidence" value="ECO:0007669"/>
    <property type="project" value="UniProtKB-UniRule"/>
</dbReference>
<dbReference type="GO" id="GO:0046933">
    <property type="term" value="F:proton-transporting ATP synthase activity, rotational mechanism"/>
    <property type="evidence" value="ECO:0007669"/>
    <property type="project" value="UniProtKB-UniRule"/>
</dbReference>
<dbReference type="CDD" id="cd18113">
    <property type="entry name" value="ATP-synt_F1_alpha_C"/>
    <property type="match status" value="1"/>
</dbReference>
<dbReference type="CDD" id="cd18116">
    <property type="entry name" value="ATP-synt_F1_alpha_N"/>
    <property type="match status" value="1"/>
</dbReference>
<dbReference type="CDD" id="cd01132">
    <property type="entry name" value="F1-ATPase_alpha_CD"/>
    <property type="match status" value="1"/>
</dbReference>
<dbReference type="FunFam" id="1.20.150.20:FF:000001">
    <property type="entry name" value="ATP synthase subunit alpha"/>
    <property type="match status" value="1"/>
</dbReference>
<dbReference type="FunFam" id="2.40.30.20:FF:000001">
    <property type="entry name" value="ATP synthase subunit alpha"/>
    <property type="match status" value="1"/>
</dbReference>
<dbReference type="FunFam" id="3.40.50.300:FF:000002">
    <property type="entry name" value="ATP synthase subunit alpha"/>
    <property type="match status" value="1"/>
</dbReference>
<dbReference type="Gene3D" id="2.40.30.20">
    <property type="match status" value="1"/>
</dbReference>
<dbReference type="Gene3D" id="1.20.150.20">
    <property type="entry name" value="ATP synthase alpha/beta chain, C-terminal domain"/>
    <property type="match status" value="1"/>
</dbReference>
<dbReference type="Gene3D" id="3.40.50.300">
    <property type="entry name" value="P-loop containing nucleotide triphosphate hydrolases"/>
    <property type="match status" value="1"/>
</dbReference>
<dbReference type="HAMAP" id="MF_01346">
    <property type="entry name" value="ATP_synth_alpha_bact"/>
    <property type="match status" value="1"/>
</dbReference>
<dbReference type="InterPro" id="IPR023366">
    <property type="entry name" value="ATP_synth_asu-like_sf"/>
</dbReference>
<dbReference type="InterPro" id="IPR000793">
    <property type="entry name" value="ATP_synth_asu_C"/>
</dbReference>
<dbReference type="InterPro" id="IPR038376">
    <property type="entry name" value="ATP_synth_asu_C_sf"/>
</dbReference>
<dbReference type="InterPro" id="IPR033732">
    <property type="entry name" value="ATP_synth_F1_a_nt-bd_dom"/>
</dbReference>
<dbReference type="InterPro" id="IPR005294">
    <property type="entry name" value="ATP_synth_F1_asu"/>
</dbReference>
<dbReference type="InterPro" id="IPR020003">
    <property type="entry name" value="ATPase_a/bsu_AS"/>
</dbReference>
<dbReference type="InterPro" id="IPR004100">
    <property type="entry name" value="ATPase_F1/V1/A1_a/bsu_N"/>
</dbReference>
<dbReference type="InterPro" id="IPR036121">
    <property type="entry name" value="ATPase_F1/V1/A1_a/bsu_N_sf"/>
</dbReference>
<dbReference type="InterPro" id="IPR000194">
    <property type="entry name" value="ATPase_F1/V1/A1_a/bsu_nucl-bd"/>
</dbReference>
<dbReference type="InterPro" id="IPR027417">
    <property type="entry name" value="P-loop_NTPase"/>
</dbReference>
<dbReference type="NCBIfam" id="TIGR00962">
    <property type="entry name" value="atpA"/>
    <property type="match status" value="1"/>
</dbReference>
<dbReference type="NCBIfam" id="NF009884">
    <property type="entry name" value="PRK13343.1"/>
    <property type="match status" value="1"/>
</dbReference>
<dbReference type="PANTHER" id="PTHR48082">
    <property type="entry name" value="ATP SYNTHASE SUBUNIT ALPHA, MITOCHONDRIAL"/>
    <property type="match status" value="1"/>
</dbReference>
<dbReference type="PANTHER" id="PTHR48082:SF2">
    <property type="entry name" value="ATP SYNTHASE SUBUNIT ALPHA, MITOCHONDRIAL"/>
    <property type="match status" value="1"/>
</dbReference>
<dbReference type="Pfam" id="PF00006">
    <property type="entry name" value="ATP-synt_ab"/>
    <property type="match status" value="1"/>
</dbReference>
<dbReference type="Pfam" id="PF00306">
    <property type="entry name" value="ATP-synt_ab_C"/>
    <property type="match status" value="1"/>
</dbReference>
<dbReference type="Pfam" id="PF02874">
    <property type="entry name" value="ATP-synt_ab_N"/>
    <property type="match status" value="1"/>
</dbReference>
<dbReference type="PIRSF" id="PIRSF039088">
    <property type="entry name" value="F_ATPase_subunit_alpha"/>
    <property type="match status" value="1"/>
</dbReference>
<dbReference type="SUPFAM" id="SSF47917">
    <property type="entry name" value="C-terminal domain of alpha and beta subunits of F1 ATP synthase"/>
    <property type="match status" value="1"/>
</dbReference>
<dbReference type="SUPFAM" id="SSF50615">
    <property type="entry name" value="N-terminal domain of alpha and beta subunits of F1 ATP synthase"/>
    <property type="match status" value="1"/>
</dbReference>
<dbReference type="SUPFAM" id="SSF52540">
    <property type="entry name" value="P-loop containing nucleoside triphosphate hydrolases"/>
    <property type="match status" value="1"/>
</dbReference>
<dbReference type="PROSITE" id="PS00152">
    <property type="entry name" value="ATPASE_ALPHA_BETA"/>
    <property type="match status" value="1"/>
</dbReference>
<protein>
    <recommendedName>
        <fullName evidence="2">ATP synthase subunit alpha</fullName>
        <ecNumber evidence="2">7.1.2.2</ecNumber>
    </recommendedName>
    <alternativeName>
        <fullName evidence="2">ATP synthase F1 sector subunit alpha</fullName>
    </alternativeName>
    <alternativeName>
        <fullName evidence="2">F-ATPase subunit alpha</fullName>
    </alternativeName>
</protein>
<reference key="1">
    <citation type="submission" date="2005-07" db="EMBL/GenBank/DDBJ databases">
        <title>Complete sequence of Synechococcus sp. CC9605.</title>
        <authorList>
            <consortium name="US DOE Joint Genome Institute"/>
            <person name="Copeland A."/>
            <person name="Lucas S."/>
            <person name="Lapidus A."/>
            <person name="Barry K."/>
            <person name="Detter J.C."/>
            <person name="Glavina T."/>
            <person name="Hammon N."/>
            <person name="Israni S."/>
            <person name="Pitluck S."/>
            <person name="Schmutz J."/>
            <person name="Martinez M."/>
            <person name="Larimer F."/>
            <person name="Land M."/>
            <person name="Kyrpides N."/>
            <person name="Ivanova N."/>
            <person name="Richardson P."/>
        </authorList>
    </citation>
    <scope>NUCLEOTIDE SEQUENCE [LARGE SCALE GENOMIC DNA]</scope>
    <source>
        <strain>CC9605</strain>
    </source>
</reference>
<evidence type="ECO:0000250" key="1"/>
<evidence type="ECO:0000255" key="2">
    <source>
        <dbReference type="HAMAP-Rule" id="MF_01346"/>
    </source>
</evidence>
<sequence length="506" mass="54168">MVSIRPDEISAILKKQIEDYDKSVSVSNVGTVLTVGDGIARVYGLQQAMAGELIEFEDGTEGIALNLEDDNVGAVLMGEGYGIQEGSTVKATGKIAAVPVGEAMLGRVVNSLGRAIDGKGEIATSETRLIESMAPGIIQRKSVHEPMQTGITAIDAMIPVGRGQRELIIGDRQTGKTAIAIDTILNQADQDMICVYVAVGQKAASVANVVEVLRERGALDYTVIVAANASEPAALQYLAPYTGATIAEYFMYKGKATLVIYDDLSKQAAAYRQMSLLLRRPPGREAYPGDVFYCHSRLLERAAKLSDAMGKGSMTALPIIETQAGDVSAYIPTNVISITDGQIFLSSDLFNSGLRPAINVGISVSRVGGAAQTKAIKKIAGTLKLELAQFDELAAFSQFASDLDASTQQQLERGKRLRELLKQPQFSPLILAEQVAIVYAGVKGLIDDVPVDKVVDFSRELREYLKSNKAEFITEIQEKKVMSPEAEAILKDAITEVVSTMVASAA</sequence>
<organism>
    <name type="scientific">Synechococcus sp. (strain CC9605)</name>
    <dbReference type="NCBI Taxonomy" id="110662"/>
    <lineage>
        <taxon>Bacteria</taxon>
        <taxon>Bacillati</taxon>
        <taxon>Cyanobacteriota</taxon>
        <taxon>Cyanophyceae</taxon>
        <taxon>Synechococcales</taxon>
        <taxon>Synechococcaceae</taxon>
        <taxon>Synechococcus</taxon>
    </lineage>
</organism>
<keyword id="KW-0066">ATP synthesis</keyword>
<keyword id="KW-0067">ATP-binding</keyword>
<keyword id="KW-0139">CF(1)</keyword>
<keyword id="KW-0375">Hydrogen ion transport</keyword>
<keyword id="KW-0406">Ion transport</keyword>
<keyword id="KW-0472">Membrane</keyword>
<keyword id="KW-0547">Nucleotide-binding</keyword>
<keyword id="KW-0793">Thylakoid</keyword>
<keyword id="KW-1278">Translocase</keyword>
<keyword id="KW-0813">Transport</keyword>
<name>ATPA_SYNSC</name>
<proteinExistence type="inferred from homology"/>
<accession>Q3AHK5</accession>
<comment type="function">
    <text evidence="2">Produces ATP from ADP in the presence of a proton gradient across the membrane. The alpha chain is a regulatory subunit.</text>
</comment>
<comment type="catalytic activity">
    <reaction evidence="2">
        <text>ATP + H2O + 4 H(+)(in) = ADP + phosphate + 5 H(+)(out)</text>
        <dbReference type="Rhea" id="RHEA:57720"/>
        <dbReference type="ChEBI" id="CHEBI:15377"/>
        <dbReference type="ChEBI" id="CHEBI:15378"/>
        <dbReference type="ChEBI" id="CHEBI:30616"/>
        <dbReference type="ChEBI" id="CHEBI:43474"/>
        <dbReference type="ChEBI" id="CHEBI:456216"/>
        <dbReference type="EC" id="7.1.2.2"/>
    </reaction>
</comment>
<comment type="subunit">
    <text evidence="1">F-type ATPases have 2 components, CF(1) - the catalytic core - and CF(0) - the membrane proton channel. CF(1) has five subunits: alpha(3), beta(3), gamma(1), delta(1), epsilon(1). CF(0) has four main subunits: a(1), b(1), b'(1) and c(9-12) (By similarity).</text>
</comment>
<comment type="subcellular location">
    <subcellularLocation>
        <location evidence="2">Cellular thylakoid membrane</location>
        <topology evidence="2">Peripheral membrane protein</topology>
    </subcellularLocation>
</comment>
<comment type="similarity">
    <text evidence="2">Belongs to the ATPase alpha/beta chains family.</text>
</comment>
<feature type="chain" id="PRO_0000238377" description="ATP synthase subunit alpha">
    <location>
        <begin position="1"/>
        <end position="506"/>
    </location>
</feature>
<feature type="binding site" evidence="2">
    <location>
        <begin position="170"/>
        <end position="177"/>
    </location>
    <ligand>
        <name>ATP</name>
        <dbReference type="ChEBI" id="CHEBI:30616"/>
    </ligand>
</feature>
<feature type="site" description="Required for activity" evidence="2">
    <location>
        <position position="363"/>
    </location>
</feature>